<organism>
    <name type="scientific">Streptomyces griseus subsp. griseus (strain JCM 4626 / CBS 651.72 / NBRC 13350 / KCC S-0626 / ISP 5235)</name>
    <dbReference type="NCBI Taxonomy" id="455632"/>
    <lineage>
        <taxon>Bacteria</taxon>
        <taxon>Bacillati</taxon>
        <taxon>Actinomycetota</taxon>
        <taxon>Actinomycetes</taxon>
        <taxon>Kitasatosporales</taxon>
        <taxon>Streptomycetaceae</taxon>
        <taxon>Streptomyces</taxon>
    </lineage>
</organism>
<comment type="function">
    <text evidence="1">Catalyzes the attachment of tyrosine to tRNA(Tyr) in a two-step reaction: tyrosine is first activated by ATP to form Tyr-AMP and then transferred to the acceptor end of tRNA(Tyr).</text>
</comment>
<comment type="catalytic activity">
    <reaction evidence="1">
        <text>tRNA(Tyr) + L-tyrosine + ATP = L-tyrosyl-tRNA(Tyr) + AMP + diphosphate + H(+)</text>
        <dbReference type="Rhea" id="RHEA:10220"/>
        <dbReference type="Rhea" id="RHEA-COMP:9706"/>
        <dbReference type="Rhea" id="RHEA-COMP:9707"/>
        <dbReference type="ChEBI" id="CHEBI:15378"/>
        <dbReference type="ChEBI" id="CHEBI:30616"/>
        <dbReference type="ChEBI" id="CHEBI:33019"/>
        <dbReference type="ChEBI" id="CHEBI:58315"/>
        <dbReference type="ChEBI" id="CHEBI:78442"/>
        <dbReference type="ChEBI" id="CHEBI:78536"/>
        <dbReference type="ChEBI" id="CHEBI:456215"/>
        <dbReference type="EC" id="6.1.1.1"/>
    </reaction>
</comment>
<comment type="subunit">
    <text evidence="1">Homodimer.</text>
</comment>
<comment type="subcellular location">
    <subcellularLocation>
        <location evidence="1">Cytoplasm</location>
    </subcellularLocation>
</comment>
<comment type="similarity">
    <text evidence="1">Belongs to the class-I aminoacyl-tRNA synthetase family. TyrS type 1 subfamily.</text>
</comment>
<name>SYY_STRGG</name>
<feature type="chain" id="PRO_1000189334" description="Tyrosine--tRNA ligase">
    <location>
        <begin position="1"/>
        <end position="423"/>
    </location>
</feature>
<feature type="domain" description="S4 RNA-binding" evidence="1">
    <location>
        <begin position="353"/>
        <end position="419"/>
    </location>
</feature>
<feature type="short sequence motif" description="'HIGH' region">
    <location>
        <begin position="40"/>
        <end position="49"/>
    </location>
</feature>
<feature type="short sequence motif" description="'KMSKS' region">
    <location>
        <begin position="231"/>
        <end position="235"/>
    </location>
</feature>
<feature type="binding site" evidence="1">
    <location>
        <position position="35"/>
    </location>
    <ligand>
        <name>L-tyrosine</name>
        <dbReference type="ChEBI" id="CHEBI:58315"/>
    </ligand>
</feature>
<feature type="binding site" evidence="1">
    <location>
        <position position="170"/>
    </location>
    <ligand>
        <name>L-tyrosine</name>
        <dbReference type="ChEBI" id="CHEBI:58315"/>
    </ligand>
</feature>
<feature type="binding site" evidence="1">
    <location>
        <position position="174"/>
    </location>
    <ligand>
        <name>L-tyrosine</name>
        <dbReference type="ChEBI" id="CHEBI:58315"/>
    </ligand>
</feature>
<feature type="binding site" evidence="1">
    <location>
        <position position="234"/>
    </location>
    <ligand>
        <name>ATP</name>
        <dbReference type="ChEBI" id="CHEBI:30616"/>
    </ligand>
</feature>
<dbReference type="EC" id="6.1.1.1" evidence="1"/>
<dbReference type="EMBL" id="AP009493">
    <property type="protein sequence ID" value="BAG22507.1"/>
    <property type="molecule type" value="Genomic_DNA"/>
</dbReference>
<dbReference type="RefSeq" id="WP_003969981.1">
    <property type="nucleotide sequence ID" value="NC_010572.1"/>
</dbReference>
<dbReference type="SMR" id="B1W1W0"/>
<dbReference type="KEGG" id="sgr:SGR_5678"/>
<dbReference type="eggNOG" id="COG0162">
    <property type="taxonomic scope" value="Bacteria"/>
</dbReference>
<dbReference type="HOGENOM" id="CLU_024003_0_2_11"/>
<dbReference type="Proteomes" id="UP000001685">
    <property type="component" value="Chromosome"/>
</dbReference>
<dbReference type="GO" id="GO:0005829">
    <property type="term" value="C:cytosol"/>
    <property type="evidence" value="ECO:0007669"/>
    <property type="project" value="TreeGrafter"/>
</dbReference>
<dbReference type="GO" id="GO:0005524">
    <property type="term" value="F:ATP binding"/>
    <property type="evidence" value="ECO:0007669"/>
    <property type="project" value="UniProtKB-UniRule"/>
</dbReference>
<dbReference type="GO" id="GO:0003723">
    <property type="term" value="F:RNA binding"/>
    <property type="evidence" value="ECO:0007669"/>
    <property type="project" value="UniProtKB-KW"/>
</dbReference>
<dbReference type="GO" id="GO:0004831">
    <property type="term" value="F:tyrosine-tRNA ligase activity"/>
    <property type="evidence" value="ECO:0007669"/>
    <property type="project" value="UniProtKB-UniRule"/>
</dbReference>
<dbReference type="GO" id="GO:0006437">
    <property type="term" value="P:tyrosyl-tRNA aminoacylation"/>
    <property type="evidence" value="ECO:0007669"/>
    <property type="project" value="UniProtKB-UniRule"/>
</dbReference>
<dbReference type="CDD" id="cd00165">
    <property type="entry name" value="S4"/>
    <property type="match status" value="1"/>
</dbReference>
<dbReference type="CDD" id="cd00805">
    <property type="entry name" value="TyrRS_core"/>
    <property type="match status" value="1"/>
</dbReference>
<dbReference type="FunFam" id="1.10.240.10:FF:000001">
    <property type="entry name" value="Tyrosine--tRNA ligase"/>
    <property type="match status" value="1"/>
</dbReference>
<dbReference type="FunFam" id="3.10.290.10:FF:000014">
    <property type="entry name" value="Tyrosine--tRNA ligase"/>
    <property type="match status" value="1"/>
</dbReference>
<dbReference type="FunFam" id="3.40.50.620:FF:000008">
    <property type="entry name" value="Tyrosine--tRNA ligase"/>
    <property type="match status" value="1"/>
</dbReference>
<dbReference type="Gene3D" id="3.40.50.620">
    <property type="entry name" value="HUPs"/>
    <property type="match status" value="1"/>
</dbReference>
<dbReference type="Gene3D" id="3.10.290.10">
    <property type="entry name" value="RNA-binding S4 domain"/>
    <property type="match status" value="1"/>
</dbReference>
<dbReference type="Gene3D" id="1.10.240.10">
    <property type="entry name" value="Tyrosyl-Transfer RNA Synthetase"/>
    <property type="match status" value="1"/>
</dbReference>
<dbReference type="HAMAP" id="MF_02006">
    <property type="entry name" value="Tyr_tRNA_synth_type1"/>
    <property type="match status" value="1"/>
</dbReference>
<dbReference type="InterPro" id="IPR001412">
    <property type="entry name" value="aa-tRNA-synth_I_CS"/>
</dbReference>
<dbReference type="InterPro" id="IPR002305">
    <property type="entry name" value="aa-tRNA-synth_Ic"/>
</dbReference>
<dbReference type="InterPro" id="IPR014729">
    <property type="entry name" value="Rossmann-like_a/b/a_fold"/>
</dbReference>
<dbReference type="InterPro" id="IPR002942">
    <property type="entry name" value="S4_RNA-bd"/>
</dbReference>
<dbReference type="InterPro" id="IPR036986">
    <property type="entry name" value="S4_RNA-bd_sf"/>
</dbReference>
<dbReference type="InterPro" id="IPR054608">
    <property type="entry name" value="SYY-like_C"/>
</dbReference>
<dbReference type="InterPro" id="IPR002307">
    <property type="entry name" value="Tyr-tRNA-ligase"/>
</dbReference>
<dbReference type="InterPro" id="IPR024088">
    <property type="entry name" value="Tyr-tRNA-ligase_bac-type"/>
</dbReference>
<dbReference type="InterPro" id="IPR024107">
    <property type="entry name" value="Tyr-tRNA-ligase_bac_1"/>
</dbReference>
<dbReference type="NCBIfam" id="TIGR00234">
    <property type="entry name" value="tyrS"/>
    <property type="match status" value="1"/>
</dbReference>
<dbReference type="PANTHER" id="PTHR11766:SF0">
    <property type="entry name" value="TYROSINE--TRNA LIGASE, MITOCHONDRIAL"/>
    <property type="match status" value="1"/>
</dbReference>
<dbReference type="PANTHER" id="PTHR11766">
    <property type="entry name" value="TYROSYL-TRNA SYNTHETASE"/>
    <property type="match status" value="1"/>
</dbReference>
<dbReference type="Pfam" id="PF22421">
    <property type="entry name" value="SYY_C-terminal"/>
    <property type="match status" value="1"/>
</dbReference>
<dbReference type="Pfam" id="PF00579">
    <property type="entry name" value="tRNA-synt_1b"/>
    <property type="match status" value="1"/>
</dbReference>
<dbReference type="PRINTS" id="PR01040">
    <property type="entry name" value="TRNASYNTHTYR"/>
</dbReference>
<dbReference type="SMART" id="SM00363">
    <property type="entry name" value="S4"/>
    <property type="match status" value="1"/>
</dbReference>
<dbReference type="SUPFAM" id="SSF55174">
    <property type="entry name" value="Alpha-L RNA-binding motif"/>
    <property type="match status" value="1"/>
</dbReference>
<dbReference type="SUPFAM" id="SSF52374">
    <property type="entry name" value="Nucleotidylyl transferase"/>
    <property type="match status" value="1"/>
</dbReference>
<dbReference type="PROSITE" id="PS00178">
    <property type="entry name" value="AA_TRNA_LIGASE_I"/>
    <property type="match status" value="1"/>
</dbReference>
<dbReference type="PROSITE" id="PS50889">
    <property type="entry name" value="S4"/>
    <property type="match status" value="1"/>
</dbReference>
<evidence type="ECO:0000255" key="1">
    <source>
        <dbReference type="HAMAP-Rule" id="MF_02006"/>
    </source>
</evidence>
<gene>
    <name evidence="1" type="primary">tyrS</name>
    <name type="ordered locus">SGR_5678</name>
</gene>
<proteinExistence type="inferred from homology"/>
<protein>
    <recommendedName>
        <fullName evidence="1">Tyrosine--tRNA ligase</fullName>
        <ecNumber evidence="1">6.1.1.1</ecNumber>
    </recommendedName>
    <alternativeName>
        <fullName evidence="1">Tyrosyl-tRNA synthetase</fullName>
        <shortName evidence="1">TyrRS</shortName>
    </alternativeName>
</protein>
<keyword id="KW-0030">Aminoacyl-tRNA synthetase</keyword>
<keyword id="KW-0067">ATP-binding</keyword>
<keyword id="KW-0963">Cytoplasm</keyword>
<keyword id="KW-0436">Ligase</keyword>
<keyword id="KW-0547">Nucleotide-binding</keyword>
<keyword id="KW-0648">Protein biosynthesis</keyword>
<keyword id="KW-0694">RNA-binding</keyword>
<accession>B1W1W0</accession>
<sequence length="423" mass="46157">MTDIVDELKWRGLFAQSTDEDALRKALADGPVTFYCGFDPTAASLHVGHLVQVLTMRRLQQAGLKPLALVGGATGQIGDPRPTAERTLNDPETIAAWVQRLRGQIEPFLTFEGPNAATMVNNLDWTAGMSAIEFLRDIGKHFRVNKMLTKDSVARRLESQEGISYTEFSYQLLQGMDFLELYRRHGCTLQQGGSDQWGNLTAGIDLIHRLEPGAVVHALATPLMTKADGTKFGKSESGAVWLDPEMTTPYAFYQFWLNVDDRDVSRYLRILSFKSREELAELEKLTEERPQARNAQRALAEELTTLVHGGEQCAAVIAASKALFGQGDLAELDEATLSAALSEVPHATVAELGPLVDLLVEVGLAPSKSGARRTVKEGGAYVNNVKVVDGEVAPDAGELLHGRWLVLRRGKKNLAAVEVGPVG</sequence>
<reference key="1">
    <citation type="journal article" date="2008" name="J. Bacteriol.">
        <title>Genome sequence of the streptomycin-producing microorganism Streptomyces griseus IFO 13350.</title>
        <authorList>
            <person name="Ohnishi Y."/>
            <person name="Ishikawa J."/>
            <person name="Hara H."/>
            <person name="Suzuki H."/>
            <person name="Ikenoya M."/>
            <person name="Ikeda H."/>
            <person name="Yamashita A."/>
            <person name="Hattori M."/>
            <person name="Horinouchi S."/>
        </authorList>
    </citation>
    <scope>NUCLEOTIDE SEQUENCE [LARGE SCALE GENOMIC DNA]</scope>
    <source>
        <strain>JCM 4626 / CBS 651.72 / NBRC 13350 / KCC S-0626 / ISP 5235</strain>
    </source>
</reference>